<organism>
    <name type="scientific">Bacillus cereus (strain ATCC 10987 / NRS 248)</name>
    <dbReference type="NCBI Taxonomy" id="222523"/>
    <lineage>
        <taxon>Bacteria</taxon>
        <taxon>Bacillati</taxon>
        <taxon>Bacillota</taxon>
        <taxon>Bacilli</taxon>
        <taxon>Bacillales</taxon>
        <taxon>Bacillaceae</taxon>
        <taxon>Bacillus</taxon>
        <taxon>Bacillus cereus group</taxon>
    </lineage>
</organism>
<keyword id="KW-0749">Sporulation</keyword>
<reference key="1">
    <citation type="journal article" date="2004" name="Nucleic Acids Res.">
        <title>The genome sequence of Bacillus cereus ATCC 10987 reveals metabolic adaptations and a large plasmid related to Bacillus anthracis pXO1.</title>
        <authorList>
            <person name="Rasko D.A."/>
            <person name="Ravel J."/>
            <person name="Oekstad O.A."/>
            <person name="Helgason E."/>
            <person name="Cer R.Z."/>
            <person name="Jiang L."/>
            <person name="Shores K.A."/>
            <person name="Fouts D.E."/>
            <person name="Tourasse N.J."/>
            <person name="Angiuoli S.V."/>
            <person name="Kolonay J.F."/>
            <person name="Nelson W.C."/>
            <person name="Kolstoe A.-B."/>
            <person name="Fraser C.M."/>
            <person name="Read T.D."/>
        </authorList>
    </citation>
    <scope>NUCLEOTIDE SEQUENCE [LARGE SCALE GENOMIC DNA]</scope>
    <source>
        <strain>ATCC 10987 / NRS 248</strain>
    </source>
</reference>
<name>SSPI_BACC1</name>
<dbReference type="EMBL" id="AE017194">
    <property type="protein sequence ID" value="AAS43590.1"/>
    <property type="molecule type" value="Genomic_DNA"/>
</dbReference>
<dbReference type="SMR" id="Q72ZH9"/>
<dbReference type="KEGG" id="bca:BCE_4689"/>
<dbReference type="HOGENOM" id="CLU_188877_0_0_9"/>
<dbReference type="Proteomes" id="UP000002527">
    <property type="component" value="Chromosome"/>
</dbReference>
<dbReference type="GO" id="GO:0030436">
    <property type="term" value="P:asexual sporulation"/>
    <property type="evidence" value="ECO:0007669"/>
    <property type="project" value="UniProtKB-UniRule"/>
</dbReference>
<dbReference type="GO" id="GO:0030435">
    <property type="term" value="P:sporulation resulting in formation of a cellular spore"/>
    <property type="evidence" value="ECO:0007669"/>
    <property type="project" value="UniProtKB-KW"/>
</dbReference>
<dbReference type="HAMAP" id="MF_00669">
    <property type="entry name" value="SspI"/>
    <property type="match status" value="1"/>
</dbReference>
<dbReference type="InterPro" id="IPR017525">
    <property type="entry name" value="SspI"/>
</dbReference>
<dbReference type="NCBIfam" id="TIGR03092">
    <property type="entry name" value="SASP_sspI"/>
    <property type="match status" value="1"/>
</dbReference>
<dbReference type="Pfam" id="PF14098">
    <property type="entry name" value="SSPI"/>
    <property type="match status" value="1"/>
</dbReference>
<protein>
    <recommendedName>
        <fullName evidence="1">Small, acid-soluble spore protein I</fullName>
        <shortName evidence="1">SASP I</shortName>
    </recommendedName>
</protein>
<sequence>MSFNLRGAVLANVSGNTQDQLQETIVDAIQSGEEKMLPGLGVLFEVIWKNADENEKHEMLETLEQGLKK</sequence>
<evidence type="ECO:0000255" key="1">
    <source>
        <dbReference type="HAMAP-Rule" id="MF_00669"/>
    </source>
</evidence>
<feature type="chain" id="PRO_0000218328" description="Small, acid-soluble spore protein I">
    <location>
        <begin position="1"/>
        <end position="69"/>
    </location>
</feature>
<proteinExistence type="inferred from homology"/>
<gene>
    <name evidence="1" type="primary">sspI</name>
    <name type="ordered locus">BCE_4689</name>
</gene>
<accession>Q72ZH9</accession>
<comment type="subcellular location">
    <subcellularLocation>
        <location evidence="1">Spore core</location>
    </subcellularLocation>
</comment>
<comment type="induction">
    <text evidence="1">Expressed only in the forespore compartment of sporulating cells.</text>
</comment>
<comment type="similarity">
    <text evidence="1">Belongs to the SspI family.</text>
</comment>